<keyword id="KW-0067">ATP-binding</keyword>
<keyword id="KW-0997">Cell inner membrane</keyword>
<keyword id="KW-1003">Cell membrane</keyword>
<keyword id="KW-0406">Ion transport</keyword>
<keyword id="KW-0472">Membrane</keyword>
<keyword id="KW-0547">Nucleotide-binding</keyword>
<keyword id="KW-1185">Reference proteome</keyword>
<keyword id="KW-1278">Translocase</keyword>
<keyword id="KW-0813">Transport</keyword>
<keyword id="KW-0862">Zinc</keyword>
<keyword id="KW-0864">Zinc transport</keyword>
<protein>
    <recommendedName>
        <fullName evidence="1">Zinc import ATP-binding protein ZnuC</fullName>
        <ecNumber evidence="1">7.2.2.20</ecNumber>
    </recommendedName>
</protein>
<comment type="function">
    <text evidence="1">Part of the ABC transporter complex ZnuABC involved in zinc import. Responsible for energy coupling to the transport system.</text>
</comment>
<comment type="catalytic activity">
    <reaction evidence="1">
        <text>Zn(2+)(out) + ATP(in) + H2O(in) = Zn(2+)(in) + ADP(in) + phosphate(in) + H(+)(in)</text>
        <dbReference type="Rhea" id="RHEA:29795"/>
        <dbReference type="ChEBI" id="CHEBI:15377"/>
        <dbReference type="ChEBI" id="CHEBI:15378"/>
        <dbReference type="ChEBI" id="CHEBI:29105"/>
        <dbReference type="ChEBI" id="CHEBI:30616"/>
        <dbReference type="ChEBI" id="CHEBI:43474"/>
        <dbReference type="ChEBI" id="CHEBI:456216"/>
        <dbReference type="EC" id="7.2.2.20"/>
    </reaction>
</comment>
<comment type="subunit">
    <text evidence="1">The complex is composed of two ATP-binding proteins (ZnuC), two transmembrane proteins (ZnuB) and a solute-binding protein (ZnuA).</text>
</comment>
<comment type="subcellular location">
    <subcellularLocation>
        <location evidence="1">Cell inner membrane</location>
        <topology evidence="1">Peripheral membrane protein</topology>
    </subcellularLocation>
</comment>
<comment type="similarity">
    <text evidence="1">Belongs to the ABC transporter superfamily. Zinc importer (TC 3.A.1.15.5) family.</text>
</comment>
<sequence length="264" mass="29297">MQIKPLTPIDRSSKTSEILVQLKNIEVTFAEKQALQNINLTIYKNSITTIVGPNGGGKSTLLKVLLKLLKPSQGQVIHQPGLKIGYVPQKLHLDHSMPITVKKFLSLKPNCSTPSIAAALTLFSIEHLAQNSMQKLSGGELQRVLLARAILDRPQLLVLDEPMQGVDISGQTELYQLLTQTRTWLNCAIIMVSHDLNIVMANTDEVLCVNKHICCAGSPELVSNDPNFIHFFGDQFAKNVAFYSHRHNHHHNLHGDICKGKCEC</sequence>
<name>ZNUC_HAEDU</name>
<feature type="chain" id="PRO_0000281508" description="Zinc import ATP-binding protein ZnuC">
    <location>
        <begin position="1"/>
        <end position="264"/>
    </location>
</feature>
<feature type="domain" description="ABC transporter" evidence="1">
    <location>
        <begin position="20"/>
        <end position="235"/>
    </location>
</feature>
<feature type="binding site" evidence="1">
    <location>
        <begin position="52"/>
        <end position="59"/>
    </location>
    <ligand>
        <name>ATP</name>
        <dbReference type="ChEBI" id="CHEBI:30616"/>
    </ligand>
</feature>
<accession>Q7VLS9</accession>
<organism>
    <name type="scientific">Haemophilus ducreyi (strain 35000HP / ATCC 700724)</name>
    <dbReference type="NCBI Taxonomy" id="233412"/>
    <lineage>
        <taxon>Bacteria</taxon>
        <taxon>Pseudomonadati</taxon>
        <taxon>Pseudomonadota</taxon>
        <taxon>Gammaproteobacteria</taxon>
        <taxon>Pasteurellales</taxon>
        <taxon>Pasteurellaceae</taxon>
        <taxon>Haemophilus</taxon>
    </lineage>
</organism>
<gene>
    <name evidence="1" type="primary">znuC</name>
    <name type="ordered locus">HD_1338</name>
</gene>
<proteinExistence type="inferred from homology"/>
<dbReference type="EC" id="7.2.2.20" evidence="1"/>
<dbReference type="EMBL" id="AE017143">
    <property type="protein sequence ID" value="AAP96156.1"/>
    <property type="molecule type" value="Genomic_DNA"/>
</dbReference>
<dbReference type="RefSeq" id="WP_010945205.1">
    <property type="nucleotide sequence ID" value="NC_002940.2"/>
</dbReference>
<dbReference type="SMR" id="Q7VLS9"/>
<dbReference type="STRING" id="233412.HD_1338"/>
<dbReference type="KEGG" id="hdu:HD_1338"/>
<dbReference type="eggNOG" id="COG1121">
    <property type="taxonomic scope" value="Bacteria"/>
</dbReference>
<dbReference type="HOGENOM" id="CLU_000604_1_11_6"/>
<dbReference type="OrthoDB" id="9780942at2"/>
<dbReference type="Proteomes" id="UP000001022">
    <property type="component" value="Chromosome"/>
</dbReference>
<dbReference type="GO" id="GO:0005886">
    <property type="term" value="C:plasma membrane"/>
    <property type="evidence" value="ECO:0007669"/>
    <property type="project" value="UniProtKB-SubCell"/>
</dbReference>
<dbReference type="GO" id="GO:0015633">
    <property type="term" value="F:ABC-type zinc transporter activity"/>
    <property type="evidence" value="ECO:0007669"/>
    <property type="project" value="UniProtKB-EC"/>
</dbReference>
<dbReference type="GO" id="GO:0005524">
    <property type="term" value="F:ATP binding"/>
    <property type="evidence" value="ECO:0007669"/>
    <property type="project" value="UniProtKB-KW"/>
</dbReference>
<dbReference type="GO" id="GO:0016887">
    <property type="term" value="F:ATP hydrolysis activity"/>
    <property type="evidence" value="ECO:0007669"/>
    <property type="project" value="InterPro"/>
</dbReference>
<dbReference type="GO" id="GO:0010043">
    <property type="term" value="P:response to zinc ion"/>
    <property type="evidence" value="ECO:0007669"/>
    <property type="project" value="TreeGrafter"/>
</dbReference>
<dbReference type="FunFam" id="3.40.50.300:FF:000392">
    <property type="entry name" value="Zinc import ATP-binding protein ZnuC"/>
    <property type="match status" value="1"/>
</dbReference>
<dbReference type="Gene3D" id="3.40.50.300">
    <property type="entry name" value="P-loop containing nucleotide triphosphate hydrolases"/>
    <property type="match status" value="1"/>
</dbReference>
<dbReference type="InterPro" id="IPR003593">
    <property type="entry name" value="AAA+_ATPase"/>
</dbReference>
<dbReference type="InterPro" id="IPR003439">
    <property type="entry name" value="ABC_transporter-like_ATP-bd"/>
</dbReference>
<dbReference type="InterPro" id="IPR017871">
    <property type="entry name" value="ABC_transporter-like_CS"/>
</dbReference>
<dbReference type="InterPro" id="IPR050153">
    <property type="entry name" value="Metal_Ion_Import_ABC"/>
</dbReference>
<dbReference type="InterPro" id="IPR027417">
    <property type="entry name" value="P-loop_NTPase"/>
</dbReference>
<dbReference type="NCBIfam" id="NF007090">
    <property type="entry name" value="PRK09544.1"/>
    <property type="match status" value="1"/>
</dbReference>
<dbReference type="PANTHER" id="PTHR42734">
    <property type="entry name" value="METAL TRANSPORT SYSTEM ATP-BINDING PROTEIN TM_0124-RELATED"/>
    <property type="match status" value="1"/>
</dbReference>
<dbReference type="PANTHER" id="PTHR42734:SF9">
    <property type="entry name" value="ZINC IMPORT ATP-BINDING PROTEIN ZNUC"/>
    <property type="match status" value="1"/>
</dbReference>
<dbReference type="Pfam" id="PF00005">
    <property type="entry name" value="ABC_tran"/>
    <property type="match status" value="1"/>
</dbReference>
<dbReference type="SMART" id="SM00382">
    <property type="entry name" value="AAA"/>
    <property type="match status" value="1"/>
</dbReference>
<dbReference type="SUPFAM" id="SSF52540">
    <property type="entry name" value="P-loop containing nucleoside triphosphate hydrolases"/>
    <property type="match status" value="1"/>
</dbReference>
<dbReference type="PROSITE" id="PS00211">
    <property type="entry name" value="ABC_TRANSPORTER_1"/>
    <property type="match status" value="1"/>
</dbReference>
<dbReference type="PROSITE" id="PS50893">
    <property type="entry name" value="ABC_TRANSPORTER_2"/>
    <property type="match status" value="1"/>
</dbReference>
<dbReference type="PROSITE" id="PS51298">
    <property type="entry name" value="ZNUC"/>
    <property type="match status" value="1"/>
</dbReference>
<evidence type="ECO:0000255" key="1">
    <source>
        <dbReference type="HAMAP-Rule" id="MF_01725"/>
    </source>
</evidence>
<reference key="1">
    <citation type="submission" date="2003-06" db="EMBL/GenBank/DDBJ databases">
        <title>The complete genome sequence of Haemophilus ducreyi.</title>
        <authorList>
            <person name="Munson R.S. Jr."/>
            <person name="Ray W.C."/>
            <person name="Mahairas G."/>
            <person name="Sabo P."/>
            <person name="Mungur R."/>
            <person name="Johnson L."/>
            <person name="Nguyen D."/>
            <person name="Wang J."/>
            <person name="Forst C."/>
            <person name="Hood L."/>
        </authorList>
    </citation>
    <scope>NUCLEOTIDE SEQUENCE [LARGE SCALE GENOMIC DNA]</scope>
    <source>
        <strain>35000HP / ATCC 700724</strain>
    </source>
</reference>